<organism evidence="29">
    <name type="scientific">Caenorhabditis elegans</name>
    <dbReference type="NCBI Taxonomy" id="6239"/>
    <lineage>
        <taxon>Eukaryota</taxon>
        <taxon>Metazoa</taxon>
        <taxon>Ecdysozoa</taxon>
        <taxon>Nematoda</taxon>
        <taxon>Chromadorea</taxon>
        <taxon>Rhabditida</taxon>
        <taxon>Rhabditina</taxon>
        <taxon>Rhabditomorpha</taxon>
        <taxon>Rhabditoidea</taxon>
        <taxon>Rhabditidae</taxon>
        <taxon>Peloderinae</taxon>
        <taxon>Caenorhabditis</taxon>
    </lineage>
</organism>
<proteinExistence type="evidence at protein level"/>
<protein>
    <recommendedName>
        <fullName evidence="1">Neuroendocrine convertase 2</fullName>
        <shortName evidence="1">NEC 2</shortName>
        <ecNumber evidence="24 25 26 27 28">3.4.21.94</ecNumber>
    </recommendedName>
    <alternativeName>
        <fullName evidence="19">Egg-laying defective protein 3</fullName>
    </alternativeName>
    <alternativeName>
        <fullName evidence="22">Kex2-like prohormone convertase 2</fullName>
        <shortName evidence="22">CELPC2</shortName>
    </alternativeName>
    <alternativeName>
        <fullName evidence="1">Prohormone convertase 2</fullName>
        <shortName evidence="18">PC2</shortName>
    </alternativeName>
    <alternativeName>
        <fullName evidence="18">Proprotein convertase 2</fullName>
    </alternativeName>
</protein>
<evidence type="ECO:0000250" key="1">
    <source>
        <dbReference type="UniProtKB" id="P16519"/>
    </source>
</evidence>
<evidence type="ECO:0000250" key="2">
    <source>
        <dbReference type="UniProtKB" id="P23188"/>
    </source>
</evidence>
<evidence type="ECO:0000255" key="3"/>
<evidence type="ECO:0000255" key="4">
    <source>
        <dbReference type="PROSITE-ProRule" id="PRU00498"/>
    </source>
</evidence>
<evidence type="ECO:0000255" key="5">
    <source>
        <dbReference type="PROSITE-ProRule" id="PRU01173"/>
    </source>
</evidence>
<evidence type="ECO:0000255" key="6">
    <source>
        <dbReference type="PROSITE-ProRule" id="PRU01240"/>
    </source>
</evidence>
<evidence type="ECO:0000269" key="7">
    <source>
    </source>
</evidence>
<evidence type="ECO:0000269" key="8">
    <source>
    </source>
</evidence>
<evidence type="ECO:0000269" key="9">
    <source>
    </source>
</evidence>
<evidence type="ECO:0000269" key="10">
    <source>
    </source>
</evidence>
<evidence type="ECO:0000269" key="11">
    <source>
    </source>
</evidence>
<evidence type="ECO:0000269" key="12">
    <source>
    </source>
</evidence>
<evidence type="ECO:0000269" key="13">
    <source>
    </source>
</evidence>
<evidence type="ECO:0000269" key="14">
    <source>
    </source>
</evidence>
<evidence type="ECO:0000269" key="15">
    <source>
    </source>
</evidence>
<evidence type="ECO:0000269" key="16">
    <source>
    </source>
</evidence>
<evidence type="ECO:0000269" key="17">
    <source>
    </source>
</evidence>
<evidence type="ECO:0000303" key="18">
    <source>
    </source>
</evidence>
<evidence type="ECO:0000303" key="19">
    <source>
    </source>
</evidence>
<evidence type="ECO:0000303" key="20">
    <source>
    </source>
</evidence>
<evidence type="ECO:0000303" key="21">
    <source>
    </source>
</evidence>
<evidence type="ECO:0000303" key="22">
    <source>
    </source>
</evidence>
<evidence type="ECO:0000305" key="23"/>
<evidence type="ECO:0000305" key="24">
    <source>
    </source>
</evidence>
<evidence type="ECO:0000305" key="25">
    <source>
    </source>
</evidence>
<evidence type="ECO:0000305" key="26">
    <source>
    </source>
</evidence>
<evidence type="ECO:0000305" key="27">
    <source>
    </source>
</evidence>
<evidence type="ECO:0000305" key="28">
    <source>
    </source>
</evidence>
<evidence type="ECO:0000312" key="29">
    <source>
        <dbReference type="EMBL" id="AAA56868.1"/>
    </source>
</evidence>
<evidence type="ECO:0000312" key="30">
    <source>
        <dbReference type="Proteomes" id="UP000001940"/>
    </source>
</evidence>
<evidence type="ECO:0000312" key="31">
    <source>
        <dbReference type="WormBase" id="C51E3.7a"/>
    </source>
</evidence>
<evidence type="ECO:0000312" key="32">
    <source>
        <dbReference type="WormBase" id="C51E3.7c"/>
    </source>
</evidence>
<sequence>MKNTHVDLICVFLSIFIGIGEAVDVYTNHFHVHLKEGGGLEDAHRIAKRHGFINRGQVAASDNEYHFVQPALVHARTRRSAGHHAKLHNDDEVLHVEQLKGYTRTKRGYRPLEQRLESQFDFSAVMSPSDPLYGYQWYLKNTGQAGGKARLDLNVERAWAMGFTGKNITTAIMDDGVDYMHPDIKNNFNAEASYDFSSNDPFPYPRYTDDWFNSHGTRCAGEIVAARDNGVCGVGVAYDGKVAGIRMLDQPYMTDLIEANSMGHEPSKIHIYSASWGPTDDGKTVDGPRNATMRAIVRGVNEGRNGLGSIFVWASGDGGEDDDCNCDGYAASMWTISINSAINNGENAHYDESCSSTLASTFSNGGRNPETGVATTDLYGRCTRSHSGTSAAAPEAAGVFALALEANPSLTWRDLQHLTVLTSSRNSLFDGRCRDFPSLGINDNHRDSHGNCSHFEWQMNGVGLEYNHLFGFGVLDAAEMVMLAMAWKTSPPRYHCTAGLIDTPHEIPADGNLILEINTDGCAGSQFEVRYLEHVQAVVSFNSTRRGDTTLYLISPMGTRTMILSRRPKDDDSKDGFTNWPFMTTHTWGENPTGKWRLVARFQGPGAHAGTLKKFELMLHGTREAPYNLIEPIVGQTNKKLDTVQKAHKRSH</sequence>
<reference evidence="29" key="1">
    <citation type="journal article" date="1994" name="Cell. Mol. Neurobiol.">
        <title>Isolation and in situ localization of a cDNA encoding a Kex2-like prohormone convertase in the nematode Caenorhabditis elegans.</title>
        <authorList>
            <person name="Gomez-Saladin E."/>
            <person name="Wilson D.L."/>
            <person name="Dickerson I.M."/>
        </authorList>
    </citation>
    <scope>NUCLEOTIDE SEQUENCE [MRNA] (ISOFORM A)</scope>
    <scope>TISSUE SPECIFICITY</scope>
    <source>
        <strain evidence="29">BA713</strain>
    </source>
</reference>
<reference evidence="30" key="2">
    <citation type="journal article" date="1998" name="Science">
        <title>Genome sequence of the nematode C. elegans: a platform for investigating biology.</title>
        <authorList>
            <consortium name="The C. elegans sequencing consortium"/>
        </authorList>
    </citation>
    <scope>NUCLEOTIDE SEQUENCE [LARGE SCALE GENOMIC DNA]</scope>
    <source>
        <strain evidence="30">Bristol N2</strain>
    </source>
</reference>
<reference evidence="23" key="3">
    <citation type="journal article" date="1983" name="Genetics">
        <title>Egg-laying defective mutants of the nematode Caenorhabditis elegans.</title>
        <authorList>
            <person name="Trent C."/>
            <person name="Tsuing N."/>
            <person name="Horvitz H.R."/>
        </authorList>
    </citation>
    <scope>FUNCTION</scope>
    <scope>MUTAGENESIS OF GLU-117; GLY-176; CYS-496 AND GLY-594</scope>
</reference>
<reference evidence="23" key="4">
    <citation type="journal article" date="2001" name="J. Neurosci.">
        <title>The EGL-3 proprotein convertase regulates mechanosensory responses of Caenorhabditis elegans.</title>
        <authorList>
            <person name="Kass J."/>
            <person name="Jacob T.C."/>
            <person name="Kim P."/>
            <person name="Kaplan J.M."/>
        </authorList>
    </citation>
    <scope>FUNCTION</scope>
    <scope>SUBCELLULAR LOCATION</scope>
    <scope>TISSUE SPECIFICITY</scope>
    <scope>MUTAGENESIS OF GLY-594 AND GLY-621</scope>
</reference>
<reference evidence="23" key="5">
    <citation type="journal article" date="2003" name="J. Neurosci.">
        <title>The EGL-21 carboxypeptidase E facilitates acetylcholine release at Caenorhabditis elegans neuromuscular junctions.</title>
        <authorList>
            <person name="Jacob T.C."/>
            <person name="Kaplan J.M."/>
        </authorList>
    </citation>
    <scope>FUNCTION</scope>
    <scope>CATALYTIC ACTIVITY</scope>
    <scope>SUBCELLULAR LOCATION</scope>
    <scope>TISSUE SPECIFICITY</scope>
    <scope>MUTAGENESIS OF GLY-621</scope>
</reference>
<reference evidence="23" key="6">
    <citation type="journal article" date="2004" name="Traffic">
        <title>Dense core vesicle dynamics in Caenorhabditis elegans neurons and the role of kinesin UNC-104.</title>
        <authorList>
            <person name="Zahn T.R."/>
            <person name="Angleson J.K."/>
            <person name="MacMorris M.A."/>
            <person name="Domke E."/>
            <person name="Hutton J.F."/>
            <person name="Schwartz C."/>
            <person name="Hutton J.C."/>
        </authorList>
    </citation>
    <scope>FUNCTION</scope>
    <scope>CATALYTIC ACTIVITY</scope>
</reference>
<reference evidence="23" key="7">
    <citation type="journal article" date="2006" name="J. Neurochem.">
        <title>Defective processing of neuropeptide precursors in Caenorhabditis elegans lacking proprotein convertase 2 (KPC-2/EGL-3): mutant analysis by mass spectrometry.</title>
        <authorList>
            <person name="Husson S.J."/>
            <person name="Clynen E."/>
            <person name="Baggerman G."/>
            <person name="Janssen T."/>
            <person name="Schoofs L."/>
        </authorList>
    </citation>
    <scope>FUNCTION</scope>
    <scope>CATALYTIC ACTIVITY</scope>
    <scope>MUTAGENESIS OF GLU-117; GLY-176 AND GLY-594</scope>
</reference>
<reference evidence="23" key="8">
    <citation type="journal article" date="2007" name="J. Neurochem.">
        <title>Impaired processing of FLP and NLP peptides in carboxypeptidase E (EGL-21)-deficient Caenorhabditis elegans as analyzed by mass spectrometry.</title>
        <authorList>
            <person name="Husson S.J."/>
            <person name="Janssen T."/>
            <person name="Baggerman G."/>
            <person name="Bogert B."/>
            <person name="Kahn-Kirby A.H."/>
            <person name="Ashrafi K."/>
            <person name="Schoofs L."/>
        </authorList>
    </citation>
    <scope>FUNCTION</scope>
</reference>
<reference evidence="23" key="9">
    <citation type="journal article" date="2007" name="J. Neurosci.">
        <title>FMRFamide-like neuropeptides and mechanosensory touch receptor neurons regulate male sexual turning behavior in Caenorhabditis elegans.</title>
        <authorList>
            <person name="Liu T."/>
            <person name="Kim K."/>
            <person name="Li C."/>
            <person name="Barr M.M."/>
        </authorList>
    </citation>
    <scope>FUNCTION</scope>
</reference>
<reference evidence="23" key="10">
    <citation type="journal article" date="2013" name="EMBO J.">
        <title>Attenuation of insulin signalling contributes to FSN-1-mediated regulation of synapse development.</title>
        <authorList>
            <person name="Hung W.L."/>
            <person name="Hwang C."/>
            <person name="Gao S."/>
            <person name="Liao E.H."/>
            <person name="Chitturi J."/>
            <person name="Wang Y."/>
            <person name="Li H."/>
            <person name="Stigloher C."/>
            <person name="Bessereau J.L."/>
            <person name="Zhen M."/>
        </authorList>
    </citation>
    <scope>FUNCTION</scope>
    <scope>CATALYTIC ACTIVITY</scope>
    <scope>INTERACTION WITH FSN-1</scope>
    <scope>UBIQUITINATION</scope>
    <scope>REGION</scope>
</reference>
<reference evidence="23" key="11">
    <citation type="journal article" date="2013" name="PLoS Genet.">
        <title>Neuropeptides function in a homeostatic manner to modulate excitation-inhibition imbalance in C. elegans.</title>
        <authorList>
            <person name="Stawicki T.M."/>
            <person name="Takayanagi-Kiya S."/>
            <person name="Zhou K."/>
            <person name="Jin Y."/>
        </authorList>
    </citation>
    <scope>FUNCTION</scope>
    <scope>MUTAGENESIS OF CYS-496</scope>
</reference>
<reference evidence="23" key="12">
    <citation type="journal article" date="2014" name="Development">
        <title>A Caenorhabditis elegans developmental decision requires insulin signaling-mediated neuron-intestine communication.</title>
        <authorList>
            <person name="Hung W.L."/>
            <person name="Wang Y."/>
            <person name="Chitturi J."/>
            <person name="Zhen M."/>
        </authorList>
    </citation>
    <scope>FUNCTION</scope>
    <scope>CATALYTIC ACTIVITY</scope>
    <scope>SUBCELLULAR LOCATION</scope>
    <scope>TISSUE SPECIFICITY</scope>
</reference>
<name>NEC2_CAEEL</name>
<gene>
    <name evidence="31" type="primary">egl-3</name>
    <name evidence="31" type="synonym">kpc-2</name>
    <name evidence="31" type="ORF">C51E3.7</name>
</gene>
<feature type="signal peptide" evidence="3">
    <location>
        <begin position="1"/>
        <end position="22"/>
    </location>
</feature>
<feature type="propeptide" id="PRO_0000439343" evidence="3">
    <location>
        <begin position="23"/>
        <end position="107"/>
    </location>
</feature>
<feature type="chain" id="PRO_5008958380" description="Neuroendocrine convertase 2" evidence="3">
    <location>
        <begin position="108"/>
        <end position="652"/>
    </location>
</feature>
<feature type="domain" description="Peptidase S8" evidence="6">
    <location>
        <begin position="136"/>
        <end position="481"/>
    </location>
</feature>
<feature type="domain" description="P/Homo B" evidence="5">
    <location>
        <begin position="489"/>
        <end position="625"/>
    </location>
</feature>
<feature type="region of interest" description="Required for ubiquitination-mediated degradation" evidence="15">
    <location>
        <begin position="501"/>
        <end position="652"/>
    </location>
</feature>
<feature type="active site" description="Charge relay system" evidence="6">
    <location>
        <position position="174"/>
    </location>
</feature>
<feature type="active site" description="Charge relay system" evidence="6">
    <location>
        <position position="215"/>
    </location>
</feature>
<feature type="active site" description="Charge relay system" evidence="6">
    <location>
        <position position="390"/>
    </location>
</feature>
<feature type="glycosylation site" description="N-linked (GlcNAc...) asparagine" evidence="4">
    <location>
        <position position="167"/>
    </location>
</feature>
<feature type="glycosylation site" description="N-linked (GlcNAc...) asparagine" evidence="4">
    <location>
        <position position="290"/>
    </location>
</feature>
<feature type="glycosylation site" description="N-linked (GlcNAc...) asparagine" evidence="4">
    <location>
        <position position="451"/>
    </location>
</feature>
<feature type="glycosylation site" description="N-linked (GlcNAc...) asparagine" evidence="4">
    <location>
        <position position="542"/>
    </location>
</feature>
<feature type="disulfide bond" evidence="2">
    <location>
        <begin position="232"/>
        <end position="382"/>
    </location>
</feature>
<feature type="disulfide bond" evidence="2">
    <location>
        <begin position="324"/>
        <end position="354"/>
    </location>
</feature>
<feature type="disulfide bond" evidence="2">
    <location>
        <begin position="496"/>
        <end position="522"/>
    </location>
</feature>
<feature type="splice variant" id="VSP_058829" description="In isoform c." evidence="23">
    <location>
        <begin position="1"/>
        <end position="125"/>
    </location>
</feature>
<feature type="mutagenesis site" description="In n588; loss of nlp and flp neuropeptide production. Egg-laying defects characterized by egg retention and resistance to serotonin and imipramine-induced egg-laying. Coiling behavior." evidence="8 11">
    <original>E</original>
    <variation>Q</variation>
    <location>
        <position position="117"/>
    </location>
</feature>
<feature type="mutagenesis site" description="In n729; loss of nlp and flp neuropeptide production. Egg-laying defects characterized by egg retention and resistance to serotonin and imipramine-induced egg-laying. Coiling behavior." evidence="8 11">
    <original>G</original>
    <variation>E</variation>
    <location>
        <position position="176"/>
    </location>
</feature>
<feature type="mutagenesis site" description="In n589; temperature-sensitive mutant. Egg-laying defects characterized by egg retention and resistance to serotonin and imipramine-induced egg-laying. Coiling behavior. Increases spontaneous convulsions in an acr-2 n2420 mutant background." evidence="8 14">
    <original>C</original>
    <variation>Y</variation>
    <location>
        <position position="496"/>
    </location>
</feature>
<feature type="mutagenesis site" description="In n150; temperature-sensitive mutant. Loss of nlp and flp neuropeptide production. Egg-laying defects characterized by egg retention and resistance to serotonin and imipramine-induced egg-laying. Restores sensitivity to nose touch in a glr-1 n2461 mutant background." evidence="7 8 11">
    <original>G</original>
    <variation>E</variation>
    <location>
        <position position="594"/>
    </location>
</feature>
<feature type="mutagenesis site" description="In nu349; egg-laying defects characterized by egg retention and resistance to serotonin and imipramine-induced egg-laying. Loss of localization to secretory vesicles in axons. Loss of FMRFamide-like peptide (FaRP) production in neurons. Resistance to acetylcholine esterase inhibitor aldicarb-induced paralysis. Insensitive to body touch but not to nose touch. Restores sensitivity to nose touch, high osmolarity and volatile repellents in a glr-1 n2461 or lin-10 n1508 mutant background." evidence="7 9">
    <original>G</original>
    <variation>R</variation>
    <location>
        <position position="621"/>
    </location>
</feature>
<keyword id="KW-0025">Alternative splicing</keyword>
<keyword id="KW-0966">Cell projection</keyword>
<keyword id="KW-0165">Cleavage on pair of basic residues</keyword>
<keyword id="KW-0968">Cytoplasmic vesicle</keyword>
<keyword id="KW-1015">Disulfide bond</keyword>
<keyword id="KW-0325">Glycoprotein</keyword>
<keyword id="KW-0378">Hydrolase</keyword>
<keyword id="KW-0645">Protease</keyword>
<keyword id="KW-1185">Reference proteome</keyword>
<keyword id="KW-0964">Secreted</keyword>
<keyword id="KW-0720">Serine protease</keyword>
<keyword id="KW-0732">Signal</keyword>
<keyword id="KW-0832">Ubl conjugation</keyword>
<keyword id="KW-0865">Zymogen</keyword>
<comment type="function">
    <text evidence="7 8 9 10 11 12 13 14 15 16">Serine endoprotease which cleaves preproteins at paired basic amino acids (PubMed:12657671, PubMed:15180830, PubMed:16945111, PubMed:23665919, PubMed:24671950). Processes FMRFamide-like (flp) and neuropeptide-like protein (nlp) neuropeptides (PubMed:12657671, PubMed:16945111). Probably by processing flp-1 and flp-18, modulates the neuronal excitation-inhibition balance and thus the level of activity of the locomotor circuit (PubMed:23658528). Regulates sensitivity to mechanosensory stimuli (PubMed:11717360). By processing neuropeptides, modulates basal acetylcholine release at the ventral cord neuromuscular junctions (PubMed:12657671). Probably by processing flp neuropeptides, regulates the turning step of male mating behavior (PubMed:17611271). Cleaves pro-insulin-like proteins ins-3, ins-4 and ins-6 into their mature active forms (PubMed:23665919, PubMed:24671950). Together with convertase kpc-1, cleaves pro-insulin-like protein ins-18 (PubMed:24671950). By controlling ins-4 and ins-6 processing and thus the activation of the daf-2/InsR pathway, negatively modulates synapse development and synaptic transmission at neuromuscular junctions (PubMed:23665919). Similarly, by controlling ins-4 and ins-6 processing, negatively regulates dauer formation under optimal environmental conditions (PubMed:24671950). Under adverse environmental conditions, may promote dauer formation by processing ins-18, a daf-2/InsR antagonist (PubMed:24671950). May cleave dense-core vesicle membrane protein ida-1 (PubMed:15180830). Involved in egg-laying, fat storage and locomotion (PubMed:11717360, PubMed:11813735, PubMed:17564681).</text>
</comment>
<comment type="catalytic activity">
    <reaction evidence="20 25 26 27 28">
        <text>Release of protein hormones and neuropeptides from their precursors, generally by hydrolysis of -Lys-Arg-|- bonds.</text>
        <dbReference type="EC" id="3.4.21.94"/>
    </reaction>
</comment>
<comment type="subunit">
    <text evidence="15">Interacts (via C-terminus) with F-box protein fsn-1 (via SPRY domain); the interaction results in egl-3 proteasomal degradation.</text>
</comment>
<comment type="subcellular location">
    <subcellularLocation>
        <location evidence="7 9">Cell projection</location>
        <location evidence="7 9">Axon</location>
    </subcellularLocation>
    <subcellularLocation>
        <location evidence="18">Cytoplasmic vesicle</location>
        <location evidence="18">Secretory vesicle lumen</location>
    </subcellularLocation>
    <subcellularLocation>
        <location evidence="21">Secreted</location>
    </subcellularLocation>
</comment>
<comment type="alternative products">
    <event type="alternative splicing"/>
    <isoform>
        <id>G5ECN9-1</id>
        <name evidence="31">a</name>
        <sequence type="displayed"/>
    </isoform>
    <isoform>
        <id>G5ECN9-3</id>
        <name evidence="32">c</name>
        <sequence type="described" ref="VSP_058829"/>
    </isoform>
</comment>
<comment type="tissue specificity">
    <text evidence="7 9 16 17">Expressed in head and tail ganglia (PubMed:11717360, PubMed:12657671, PubMed:24671950, PubMed:7954663). Expressed in neurons including mechanosensory and motor neurons, and interneurons (at protein level) (PubMed:11717360, PubMed:12657671). Expressed in the nerve ring, ventral nerve cord and intestine (PubMed:24671950).</text>
</comment>
<comment type="PTM">
    <text evidence="15">Ubiquitinated.</text>
</comment>
<comment type="similarity">
    <text evidence="23">Belongs to the peptidase S8 family. Furin subfamily.</text>
</comment>
<accession>G5ECN9</accession>
<accession>E9P883</accession>
<accession>Q18772</accession>
<dbReference type="EC" id="3.4.21.94" evidence="24 25 26 27 28"/>
<dbReference type="EMBL" id="U04995">
    <property type="protein sequence ID" value="AAA56868.1"/>
    <property type="molecule type" value="mRNA"/>
</dbReference>
<dbReference type="EMBL" id="BX284605">
    <property type="protein sequence ID" value="CAB01635.1"/>
    <property type="molecule type" value="Genomic_DNA"/>
</dbReference>
<dbReference type="EMBL" id="BX284605">
    <property type="protein sequence ID" value="CAB01642.1"/>
    <property type="molecule type" value="Genomic_DNA"/>
</dbReference>
<dbReference type="EMBL" id="BX284605">
    <property type="protein sequence ID" value="CBZ01786.1"/>
    <property type="molecule type" value="Genomic_DNA"/>
</dbReference>
<dbReference type="PIR" id="C89181">
    <property type="entry name" value="C89181"/>
</dbReference>
<dbReference type="PIR" id="T20131">
    <property type="entry name" value="T20131"/>
</dbReference>
<dbReference type="RefSeq" id="NP_001023732.1">
    <molecule id="G5ECN9-1"/>
    <property type="nucleotide sequence ID" value="NM_001028561.4"/>
</dbReference>
<dbReference type="RefSeq" id="NP_001256192.1">
    <molecule id="G5ECN9-3"/>
    <property type="nucleotide sequence ID" value="NM_001269263.3"/>
</dbReference>
<dbReference type="SMR" id="G5ECN9"/>
<dbReference type="FunCoup" id="G5ECN9">
    <property type="interactions" value="477"/>
</dbReference>
<dbReference type="STRING" id="6239.C51E3.7a.1"/>
<dbReference type="MEROPS" id="S08.109"/>
<dbReference type="GlyCosmos" id="G5ECN9">
    <property type="glycosylation" value="4 sites, No reported glycans"/>
</dbReference>
<dbReference type="PaxDb" id="6239-C51E3.7a"/>
<dbReference type="PeptideAtlas" id="G5ECN9"/>
<dbReference type="EnsemblMetazoa" id="C51E3.7a.1">
    <molecule id="G5ECN9-1"/>
    <property type="protein sequence ID" value="C51E3.7a.1"/>
    <property type="gene ID" value="WBGene00001172"/>
</dbReference>
<dbReference type="EnsemblMetazoa" id="C51E3.7c.1">
    <molecule id="G5ECN9-3"/>
    <property type="protein sequence ID" value="C51E3.7c.1"/>
    <property type="gene ID" value="WBGene00001172"/>
</dbReference>
<dbReference type="GeneID" id="179412"/>
<dbReference type="KEGG" id="cel:CELE_C51E3.7"/>
<dbReference type="AGR" id="WB:WBGene00001172"/>
<dbReference type="CTD" id="179412"/>
<dbReference type="WormBase" id="C51E3.7a">
    <molecule id="G5ECN9-1"/>
    <property type="protein sequence ID" value="CE08940"/>
    <property type="gene ID" value="WBGene00001172"/>
    <property type="gene designation" value="egl-3"/>
</dbReference>
<dbReference type="WormBase" id="C51E3.7c">
    <molecule id="G5ECN9-3"/>
    <property type="protein sequence ID" value="CE45708"/>
    <property type="gene ID" value="WBGene00001172"/>
    <property type="gene designation" value="egl-3"/>
</dbReference>
<dbReference type="eggNOG" id="KOG3526">
    <property type="taxonomic scope" value="Eukaryota"/>
</dbReference>
<dbReference type="GeneTree" id="ENSGT00940000156965"/>
<dbReference type="InParanoid" id="G5ECN9"/>
<dbReference type="OMA" id="LAKQWHS"/>
<dbReference type="OrthoDB" id="300641at2759"/>
<dbReference type="PhylomeDB" id="G5ECN9"/>
<dbReference type="PRO" id="PR:G5ECN9"/>
<dbReference type="Proteomes" id="UP000001940">
    <property type="component" value="Chromosome V"/>
</dbReference>
<dbReference type="Bgee" id="WBGene00001172">
    <property type="expression patterns" value="Expressed in larva and 4 other cell types or tissues"/>
</dbReference>
<dbReference type="GO" id="GO:0030424">
    <property type="term" value="C:axon"/>
    <property type="evidence" value="ECO:0000314"/>
    <property type="project" value="WormBase"/>
</dbReference>
<dbReference type="GO" id="GO:0031410">
    <property type="term" value="C:cytoplasmic vesicle"/>
    <property type="evidence" value="ECO:0007669"/>
    <property type="project" value="UniProtKB-KW"/>
</dbReference>
<dbReference type="GO" id="GO:0005615">
    <property type="term" value="C:extracellular space"/>
    <property type="evidence" value="ECO:0000318"/>
    <property type="project" value="GO_Central"/>
</dbReference>
<dbReference type="GO" id="GO:0016020">
    <property type="term" value="C:membrane"/>
    <property type="evidence" value="ECO:0000318"/>
    <property type="project" value="GO_Central"/>
</dbReference>
<dbReference type="GO" id="GO:0043005">
    <property type="term" value="C:neuron projection"/>
    <property type="evidence" value="ECO:0000318"/>
    <property type="project" value="GO_Central"/>
</dbReference>
<dbReference type="GO" id="GO:0045202">
    <property type="term" value="C:synapse"/>
    <property type="evidence" value="ECO:0007669"/>
    <property type="project" value="GOC"/>
</dbReference>
<dbReference type="GO" id="GO:0098770">
    <property type="term" value="F:FBXO family protein binding"/>
    <property type="evidence" value="ECO:0000353"/>
    <property type="project" value="UniProtKB"/>
</dbReference>
<dbReference type="GO" id="GO:0004252">
    <property type="term" value="F:serine-type endopeptidase activity"/>
    <property type="evidence" value="ECO:0000315"/>
    <property type="project" value="UniProtKB"/>
</dbReference>
<dbReference type="GO" id="GO:0090474">
    <property type="term" value="P:arg-arg specific dibasic protein processing"/>
    <property type="evidence" value="ECO:0000315"/>
    <property type="project" value="UniProtKB"/>
</dbReference>
<dbReference type="GO" id="GO:0008340">
    <property type="term" value="P:determination of adult lifespan"/>
    <property type="evidence" value="ECO:0000316"/>
    <property type="project" value="UniProtKB"/>
</dbReference>
<dbReference type="GO" id="GO:0090472">
    <property type="term" value="P:dibasic protein processing"/>
    <property type="evidence" value="ECO:0000315"/>
    <property type="project" value="UniProtKB"/>
</dbReference>
<dbReference type="GO" id="GO:0030070">
    <property type="term" value="P:insulin processing"/>
    <property type="evidence" value="ECO:0000315"/>
    <property type="project" value="UniProtKB"/>
</dbReference>
<dbReference type="GO" id="GO:0030536">
    <property type="term" value="P:larval feeding behavior"/>
    <property type="evidence" value="ECO:0000315"/>
    <property type="project" value="UniProtKB"/>
</dbReference>
<dbReference type="GO" id="GO:1905910">
    <property type="term" value="P:negative regulation of dauer entry"/>
    <property type="evidence" value="ECO:0000316"/>
    <property type="project" value="UniProtKB"/>
</dbReference>
<dbReference type="GO" id="GO:1904810">
    <property type="term" value="P:negative regulation of dense core granule transport"/>
    <property type="evidence" value="ECO:0000315"/>
    <property type="project" value="UniProtKB"/>
</dbReference>
<dbReference type="GO" id="GO:0061096">
    <property type="term" value="P:negative regulation of turning behavior involved in mating"/>
    <property type="evidence" value="ECO:0000315"/>
    <property type="project" value="WormBase"/>
</dbReference>
<dbReference type="GO" id="GO:0007274">
    <property type="term" value="P:neuromuscular synaptic transmission"/>
    <property type="evidence" value="ECO:0000316"/>
    <property type="project" value="UniProtKB"/>
</dbReference>
<dbReference type="GO" id="GO:0061837">
    <property type="term" value="P:neuropeptide processing"/>
    <property type="evidence" value="ECO:0000315"/>
    <property type="project" value="UniProtKB"/>
</dbReference>
<dbReference type="GO" id="GO:0016486">
    <property type="term" value="P:peptide hormone processing"/>
    <property type="evidence" value="ECO:0000318"/>
    <property type="project" value="GO_Central"/>
</dbReference>
<dbReference type="GO" id="GO:0014057">
    <property type="term" value="P:positive regulation of acetylcholine secretion, neurotransmission"/>
    <property type="evidence" value="ECO:0000315"/>
    <property type="project" value="UniProtKB"/>
</dbReference>
<dbReference type="GO" id="GO:1905852">
    <property type="term" value="P:positive regulation of backward locomotion"/>
    <property type="evidence" value="ECO:0000316"/>
    <property type="project" value="UniProtKB"/>
</dbReference>
<dbReference type="GO" id="GO:0060456">
    <property type="term" value="P:positive regulation of digestive system process"/>
    <property type="evidence" value="ECO:0000315"/>
    <property type="project" value="UniProtKB"/>
</dbReference>
<dbReference type="GO" id="GO:1901046">
    <property type="term" value="P:positive regulation of egg-laying behavior"/>
    <property type="evidence" value="ECO:0000315"/>
    <property type="project" value="UniProtKB"/>
</dbReference>
<dbReference type="GO" id="GO:1905850">
    <property type="term" value="P:positive regulation of forward locomotion"/>
    <property type="evidence" value="ECO:0000315"/>
    <property type="project" value="UniProtKB"/>
</dbReference>
<dbReference type="GO" id="GO:1905954">
    <property type="term" value="P:positive regulation of lipid localization"/>
    <property type="evidence" value="ECO:0000315"/>
    <property type="project" value="UniProtKB"/>
</dbReference>
<dbReference type="GO" id="GO:0090326">
    <property type="term" value="P:positive regulation of locomotion involved in locomotory behavior"/>
    <property type="evidence" value="ECO:0000315"/>
    <property type="project" value="UniProtKB"/>
</dbReference>
<dbReference type="GO" id="GO:0045887">
    <property type="term" value="P:positive regulation of synaptic assembly at neuromuscular junction"/>
    <property type="evidence" value="ECO:0000316"/>
    <property type="project" value="UniProtKB"/>
</dbReference>
<dbReference type="GO" id="GO:0043058">
    <property type="term" value="P:regulation of backward locomotion"/>
    <property type="evidence" value="ECO:0000316"/>
    <property type="project" value="UniProtKB"/>
</dbReference>
<dbReference type="GO" id="GO:1903998">
    <property type="term" value="P:regulation of eating behavior"/>
    <property type="evidence" value="ECO:0000315"/>
    <property type="project" value="UniProtKB"/>
</dbReference>
<dbReference type="GO" id="GO:0090325">
    <property type="term" value="P:regulation of locomotion involved in locomotory behavior"/>
    <property type="evidence" value="ECO:0000315"/>
    <property type="project" value="WormBase"/>
</dbReference>
<dbReference type="GO" id="GO:0006937">
    <property type="term" value="P:regulation of muscle contraction"/>
    <property type="evidence" value="ECO:0000315"/>
    <property type="project" value="UniProtKB"/>
</dbReference>
<dbReference type="GO" id="GO:1900073">
    <property type="term" value="P:regulation of neuromuscular synaptic transmission"/>
    <property type="evidence" value="ECO:0000316"/>
    <property type="project" value="UniProtKB"/>
</dbReference>
<dbReference type="GO" id="GO:0008582">
    <property type="term" value="P:regulation of synaptic assembly at neuromuscular junction"/>
    <property type="evidence" value="ECO:0000316"/>
    <property type="project" value="UniProtKB"/>
</dbReference>
<dbReference type="GO" id="GO:0009612">
    <property type="term" value="P:response to mechanical stimulus"/>
    <property type="evidence" value="ECO:0000315"/>
    <property type="project" value="UniProtKB"/>
</dbReference>
<dbReference type="GO" id="GO:1904014">
    <property type="term" value="P:response to serotonin"/>
    <property type="evidence" value="ECO:0000315"/>
    <property type="project" value="UniProtKB"/>
</dbReference>
<dbReference type="CDD" id="cd04059">
    <property type="entry name" value="Peptidases_S8_Protein_convertases_Kexins_Furin-like"/>
    <property type="match status" value="1"/>
</dbReference>
<dbReference type="FunFam" id="2.60.120.260:FF:000181">
    <property type="entry name" value="Neuroendocrine convertase 2"/>
    <property type="match status" value="1"/>
</dbReference>
<dbReference type="FunFam" id="3.30.70.850:FF:000007">
    <property type="entry name" value="Neuroendocrine convertase 2"/>
    <property type="match status" value="1"/>
</dbReference>
<dbReference type="FunFam" id="3.40.50.200:FF:000004">
    <property type="entry name" value="Proprotein convertase type 2"/>
    <property type="match status" value="1"/>
</dbReference>
<dbReference type="Gene3D" id="2.60.120.260">
    <property type="entry name" value="Galactose-binding domain-like"/>
    <property type="match status" value="1"/>
</dbReference>
<dbReference type="Gene3D" id="3.30.70.850">
    <property type="entry name" value="Peptidase S8, pro-domain"/>
    <property type="match status" value="1"/>
</dbReference>
<dbReference type="Gene3D" id="3.40.50.200">
    <property type="entry name" value="Peptidase S8/S53 domain"/>
    <property type="match status" value="1"/>
</dbReference>
<dbReference type="InterPro" id="IPR008979">
    <property type="entry name" value="Galactose-bd-like_sf"/>
</dbReference>
<dbReference type="InterPro" id="IPR034182">
    <property type="entry name" value="Kexin/furin"/>
</dbReference>
<dbReference type="InterPro" id="IPR002884">
    <property type="entry name" value="P_dom"/>
</dbReference>
<dbReference type="InterPro" id="IPR000209">
    <property type="entry name" value="Peptidase_S8/S53_dom"/>
</dbReference>
<dbReference type="InterPro" id="IPR036852">
    <property type="entry name" value="Peptidase_S8/S53_dom_sf"/>
</dbReference>
<dbReference type="InterPro" id="IPR023827">
    <property type="entry name" value="Peptidase_S8_Asp-AS"/>
</dbReference>
<dbReference type="InterPro" id="IPR022398">
    <property type="entry name" value="Peptidase_S8_His-AS"/>
</dbReference>
<dbReference type="InterPro" id="IPR023828">
    <property type="entry name" value="Peptidase_S8_Ser-AS"/>
</dbReference>
<dbReference type="InterPro" id="IPR015500">
    <property type="entry name" value="Peptidase_S8_subtilisin-rel"/>
</dbReference>
<dbReference type="InterPro" id="IPR032815">
    <property type="entry name" value="S8_pro-domain"/>
</dbReference>
<dbReference type="InterPro" id="IPR038466">
    <property type="entry name" value="S8_pro-domain_sf"/>
</dbReference>
<dbReference type="PANTHER" id="PTHR42884:SF13">
    <property type="entry name" value="NEUROENDOCRINE CONVERTASE 2"/>
    <property type="match status" value="1"/>
</dbReference>
<dbReference type="PANTHER" id="PTHR42884">
    <property type="entry name" value="PROPROTEIN CONVERTASE SUBTILISIN/KEXIN-RELATED"/>
    <property type="match status" value="1"/>
</dbReference>
<dbReference type="Pfam" id="PF01483">
    <property type="entry name" value="P_proprotein"/>
    <property type="match status" value="1"/>
</dbReference>
<dbReference type="Pfam" id="PF00082">
    <property type="entry name" value="Peptidase_S8"/>
    <property type="match status" value="1"/>
</dbReference>
<dbReference type="Pfam" id="PF16470">
    <property type="entry name" value="S8_pro-domain"/>
    <property type="match status" value="1"/>
</dbReference>
<dbReference type="PRINTS" id="PR00723">
    <property type="entry name" value="SUBTILISIN"/>
</dbReference>
<dbReference type="SUPFAM" id="SSF49785">
    <property type="entry name" value="Galactose-binding domain-like"/>
    <property type="match status" value="1"/>
</dbReference>
<dbReference type="SUPFAM" id="SSF54897">
    <property type="entry name" value="Protease propeptides/inhibitors"/>
    <property type="match status" value="1"/>
</dbReference>
<dbReference type="SUPFAM" id="SSF52743">
    <property type="entry name" value="Subtilisin-like"/>
    <property type="match status" value="1"/>
</dbReference>
<dbReference type="PROSITE" id="PS51829">
    <property type="entry name" value="P_HOMO_B"/>
    <property type="match status" value="1"/>
</dbReference>
<dbReference type="PROSITE" id="PS51892">
    <property type="entry name" value="SUBTILASE"/>
    <property type="match status" value="1"/>
</dbReference>
<dbReference type="PROSITE" id="PS00136">
    <property type="entry name" value="SUBTILASE_ASP"/>
    <property type="match status" value="1"/>
</dbReference>
<dbReference type="PROSITE" id="PS00137">
    <property type="entry name" value="SUBTILASE_HIS"/>
    <property type="match status" value="1"/>
</dbReference>
<dbReference type="PROSITE" id="PS00138">
    <property type="entry name" value="SUBTILASE_SER"/>
    <property type="match status" value="1"/>
</dbReference>